<comment type="function">
    <text evidence="1">Catalyzes the reduction of the glycolytic intermediate dihydroxyacetone phosphate (DHAP) to sn-glycerol 3-phosphate (G3P), the key precursor for phospholipid synthesis.</text>
</comment>
<comment type="catalytic activity">
    <reaction evidence="1">
        <text>sn-glycerol 3-phosphate + NAD(+) = dihydroxyacetone phosphate + NADH + H(+)</text>
        <dbReference type="Rhea" id="RHEA:11092"/>
        <dbReference type="ChEBI" id="CHEBI:15378"/>
        <dbReference type="ChEBI" id="CHEBI:57540"/>
        <dbReference type="ChEBI" id="CHEBI:57597"/>
        <dbReference type="ChEBI" id="CHEBI:57642"/>
        <dbReference type="ChEBI" id="CHEBI:57945"/>
        <dbReference type="EC" id="1.1.1.94"/>
    </reaction>
    <physiologicalReaction direction="right-to-left" evidence="1">
        <dbReference type="Rhea" id="RHEA:11094"/>
    </physiologicalReaction>
</comment>
<comment type="catalytic activity">
    <reaction evidence="1">
        <text>sn-glycerol 3-phosphate + NADP(+) = dihydroxyacetone phosphate + NADPH + H(+)</text>
        <dbReference type="Rhea" id="RHEA:11096"/>
        <dbReference type="ChEBI" id="CHEBI:15378"/>
        <dbReference type="ChEBI" id="CHEBI:57597"/>
        <dbReference type="ChEBI" id="CHEBI:57642"/>
        <dbReference type="ChEBI" id="CHEBI:57783"/>
        <dbReference type="ChEBI" id="CHEBI:58349"/>
        <dbReference type="EC" id="1.1.1.94"/>
    </reaction>
    <physiologicalReaction direction="right-to-left" evidence="1">
        <dbReference type="Rhea" id="RHEA:11098"/>
    </physiologicalReaction>
</comment>
<comment type="pathway">
    <text evidence="1">Membrane lipid metabolism; glycerophospholipid metabolism.</text>
</comment>
<comment type="subcellular location">
    <subcellularLocation>
        <location evidence="1">Cytoplasm</location>
    </subcellularLocation>
</comment>
<comment type="similarity">
    <text evidence="1">Belongs to the NAD-dependent glycerol-3-phosphate dehydrogenase family.</text>
</comment>
<keyword id="KW-0963">Cytoplasm</keyword>
<keyword id="KW-0444">Lipid biosynthesis</keyword>
<keyword id="KW-0443">Lipid metabolism</keyword>
<keyword id="KW-0520">NAD</keyword>
<keyword id="KW-0521">NADP</keyword>
<keyword id="KW-0547">Nucleotide-binding</keyword>
<keyword id="KW-0560">Oxidoreductase</keyword>
<keyword id="KW-0594">Phospholipid biosynthesis</keyword>
<keyword id="KW-1208">Phospholipid metabolism</keyword>
<protein>
    <recommendedName>
        <fullName evidence="1">Glycerol-3-phosphate dehydrogenase [NAD(P)+]</fullName>
        <ecNumber evidence="1">1.1.1.94</ecNumber>
    </recommendedName>
    <alternativeName>
        <fullName evidence="1">NAD(P)(+)-dependent glycerol-3-phosphate dehydrogenase</fullName>
    </alternativeName>
    <alternativeName>
        <fullName evidence="1">NAD(P)H-dependent dihydroxyacetone-phosphate reductase</fullName>
    </alternativeName>
</protein>
<dbReference type="EC" id="1.1.1.94" evidence="1"/>
<dbReference type="EMBL" id="CP000683">
    <property type="protein sequence ID" value="ABV84803.1"/>
    <property type="molecule type" value="Genomic_DNA"/>
</dbReference>
<dbReference type="RefSeq" id="WP_012152778.1">
    <property type="nucleotide sequence ID" value="NC_009900.1"/>
</dbReference>
<dbReference type="SMR" id="A8F1L7"/>
<dbReference type="KEGG" id="rms:RMA_0628"/>
<dbReference type="HOGENOM" id="CLU_033449_0_2_5"/>
<dbReference type="UniPathway" id="UPA00940"/>
<dbReference type="Proteomes" id="UP000001311">
    <property type="component" value="Chromosome"/>
</dbReference>
<dbReference type="GO" id="GO:0005829">
    <property type="term" value="C:cytosol"/>
    <property type="evidence" value="ECO:0007669"/>
    <property type="project" value="TreeGrafter"/>
</dbReference>
<dbReference type="GO" id="GO:0047952">
    <property type="term" value="F:glycerol-3-phosphate dehydrogenase [NAD(P)+] activity"/>
    <property type="evidence" value="ECO:0007669"/>
    <property type="project" value="UniProtKB-UniRule"/>
</dbReference>
<dbReference type="GO" id="GO:0051287">
    <property type="term" value="F:NAD binding"/>
    <property type="evidence" value="ECO:0007669"/>
    <property type="project" value="InterPro"/>
</dbReference>
<dbReference type="GO" id="GO:0005975">
    <property type="term" value="P:carbohydrate metabolic process"/>
    <property type="evidence" value="ECO:0007669"/>
    <property type="project" value="InterPro"/>
</dbReference>
<dbReference type="GO" id="GO:0046167">
    <property type="term" value="P:glycerol-3-phosphate biosynthetic process"/>
    <property type="evidence" value="ECO:0007669"/>
    <property type="project" value="UniProtKB-UniRule"/>
</dbReference>
<dbReference type="GO" id="GO:0046168">
    <property type="term" value="P:glycerol-3-phosphate catabolic process"/>
    <property type="evidence" value="ECO:0007669"/>
    <property type="project" value="InterPro"/>
</dbReference>
<dbReference type="GO" id="GO:0006650">
    <property type="term" value="P:glycerophospholipid metabolic process"/>
    <property type="evidence" value="ECO:0007669"/>
    <property type="project" value="UniProtKB-UniRule"/>
</dbReference>
<dbReference type="GO" id="GO:0008654">
    <property type="term" value="P:phospholipid biosynthetic process"/>
    <property type="evidence" value="ECO:0007669"/>
    <property type="project" value="UniProtKB-KW"/>
</dbReference>
<dbReference type="Gene3D" id="1.10.1040.10">
    <property type="entry name" value="N-(1-d-carboxylethyl)-l-norvaline Dehydrogenase, domain 2"/>
    <property type="match status" value="1"/>
</dbReference>
<dbReference type="Gene3D" id="3.40.50.720">
    <property type="entry name" value="NAD(P)-binding Rossmann-like Domain"/>
    <property type="match status" value="1"/>
</dbReference>
<dbReference type="HAMAP" id="MF_00394">
    <property type="entry name" value="NAD_Glyc3P_dehydrog"/>
    <property type="match status" value="1"/>
</dbReference>
<dbReference type="InterPro" id="IPR008927">
    <property type="entry name" value="6-PGluconate_DH-like_C_sf"/>
</dbReference>
<dbReference type="InterPro" id="IPR013328">
    <property type="entry name" value="6PGD_dom2"/>
</dbReference>
<dbReference type="InterPro" id="IPR006168">
    <property type="entry name" value="G3P_DH_NAD-dep"/>
</dbReference>
<dbReference type="InterPro" id="IPR006109">
    <property type="entry name" value="G3P_DH_NAD-dep_C"/>
</dbReference>
<dbReference type="InterPro" id="IPR011128">
    <property type="entry name" value="G3P_DH_NAD-dep_N"/>
</dbReference>
<dbReference type="InterPro" id="IPR036291">
    <property type="entry name" value="NAD(P)-bd_dom_sf"/>
</dbReference>
<dbReference type="NCBIfam" id="NF000940">
    <property type="entry name" value="PRK00094.1-2"/>
    <property type="match status" value="1"/>
</dbReference>
<dbReference type="NCBIfam" id="NF000947">
    <property type="entry name" value="PRK00094.2-5"/>
    <property type="match status" value="1"/>
</dbReference>
<dbReference type="PANTHER" id="PTHR11728">
    <property type="entry name" value="GLYCEROL-3-PHOSPHATE DEHYDROGENASE"/>
    <property type="match status" value="1"/>
</dbReference>
<dbReference type="PANTHER" id="PTHR11728:SF1">
    <property type="entry name" value="GLYCEROL-3-PHOSPHATE DEHYDROGENASE [NAD(+)] 2, CHLOROPLASTIC"/>
    <property type="match status" value="1"/>
</dbReference>
<dbReference type="Pfam" id="PF07479">
    <property type="entry name" value="NAD_Gly3P_dh_C"/>
    <property type="match status" value="1"/>
</dbReference>
<dbReference type="Pfam" id="PF01210">
    <property type="entry name" value="NAD_Gly3P_dh_N"/>
    <property type="match status" value="1"/>
</dbReference>
<dbReference type="PIRSF" id="PIRSF000114">
    <property type="entry name" value="Glycerol-3-P_dh"/>
    <property type="match status" value="1"/>
</dbReference>
<dbReference type="PRINTS" id="PR00077">
    <property type="entry name" value="GPDHDRGNASE"/>
</dbReference>
<dbReference type="SUPFAM" id="SSF48179">
    <property type="entry name" value="6-phosphogluconate dehydrogenase C-terminal domain-like"/>
    <property type="match status" value="1"/>
</dbReference>
<dbReference type="SUPFAM" id="SSF51735">
    <property type="entry name" value="NAD(P)-binding Rossmann-fold domains"/>
    <property type="match status" value="1"/>
</dbReference>
<dbReference type="PROSITE" id="PS00957">
    <property type="entry name" value="NAD_G3PDH"/>
    <property type="match status" value="1"/>
</dbReference>
<accession>A8F1L7</accession>
<gene>
    <name evidence="1" type="primary">gpsA</name>
    <name type="ordered locus">RMA_0628</name>
</gene>
<proteinExistence type="inferred from homology"/>
<reference key="1">
    <citation type="journal article" date="2007" name="Genome Res.">
        <title>Lateral gene transfer between obligate intracellular bacteria: evidence from the Rickettsia massiliae genome.</title>
        <authorList>
            <person name="Blanc G."/>
            <person name="Ogata H."/>
            <person name="Robert C."/>
            <person name="Audic S."/>
            <person name="Claverie J.-M."/>
            <person name="Raoult D."/>
        </authorList>
    </citation>
    <scope>NUCLEOTIDE SEQUENCE [LARGE SCALE GENOMIC DNA]</scope>
    <source>
        <strain>Mtu5</strain>
    </source>
</reference>
<feature type="chain" id="PRO_1000060788" description="Glycerol-3-phosphate dehydrogenase [NAD(P)+]">
    <location>
        <begin position="1"/>
        <end position="330"/>
    </location>
</feature>
<feature type="active site" description="Proton acceptor" evidence="1">
    <location>
        <position position="192"/>
    </location>
</feature>
<feature type="binding site" evidence="1">
    <location>
        <position position="14"/>
    </location>
    <ligand>
        <name>NADPH</name>
        <dbReference type="ChEBI" id="CHEBI:57783"/>
    </ligand>
</feature>
<feature type="binding site" evidence="1">
    <location>
        <position position="15"/>
    </location>
    <ligand>
        <name>NADPH</name>
        <dbReference type="ChEBI" id="CHEBI:57783"/>
    </ligand>
</feature>
<feature type="binding site" evidence="1">
    <location>
        <position position="35"/>
    </location>
    <ligand>
        <name>NADPH</name>
        <dbReference type="ChEBI" id="CHEBI:57783"/>
    </ligand>
</feature>
<feature type="binding site" evidence="1">
    <location>
        <position position="109"/>
    </location>
    <ligand>
        <name>NADPH</name>
        <dbReference type="ChEBI" id="CHEBI:57783"/>
    </ligand>
</feature>
<feature type="binding site" evidence="1">
    <location>
        <position position="109"/>
    </location>
    <ligand>
        <name>sn-glycerol 3-phosphate</name>
        <dbReference type="ChEBI" id="CHEBI:57597"/>
    </ligand>
</feature>
<feature type="binding site" evidence="1">
    <location>
        <position position="137"/>
    </location>
    <ligand>
        <name>sn-glycerol 3-phosphate</name>
        <dbReference type="ChEBI" id="CHEBI:57597"/>
    </ligand>
</feature>
<feature type="binding site" evidence="1">
    <location>
        <position position="141"/>
    </location>
    <ligand>
        <name>NADPH</name>
        <dbReference type="ChEBI" id="CHEBI:57783"/>
    </ligand>
</feature>
<feature type="binding site" evidence="1">
    <location>
        <position position="192"/>
    </location>
    <ligand>
        <name>sn-glycerol 3-phosphate</name>
        <dbReference type="ChEBI" id="CHEBI:57597"/>
    </ligand>
</feature>
<feature type="binding site" evidence="1">
    <location>
        <position position="248"/>
    </location>
    <ligand>
        <name>sn-glycerol 3-phosphate</name>
        <dbReference type="ChEBI" id="CHEBI:57597"/>
    </ligand>
</feature>
<feature type="binding site" evidence="1">
    <location>
        <position position="258"/>
    </location>
    <ligand>
        <name>sn-glycerol 3-phosphate</name>
        <dbReference type="ChEBI" id="CHEBI:57597"/>
    </ligand>
</feature>
<feature type="binding site" evidence="1">
    <location>
        <position position="259"/>
    </location>
    <ligand>
        <name>NADPH</name>
        <dbReference type="ChEBI" id="CHEBI:57783"/>
    </ligand>
</feature>
<feature type="binding site" evidence="1">
    <location>
        <position position="259"/>
    </location>
    <ligand>
        <name>sn-glycerol 3-phosphate</name>
        <dbReference type="ChEBI" id="CHEBI:57597"/>
    </ligand>
</feature>
<feature type="binding site" evidence="1">
    <location>
        <position position="260"/>
    </location>
    <ligand>
        <name>sn-glycerol 3-phosphate</name>
        <dbReference type="ChEBI" id="CHEBI:57597"/>
    </ligand>
</feature>
<feature type="binding site" evidence="1">
    <location>
        <position position="283"/>
    </location>
    <ligand>
        <name>NADPH</name>
        <dbReference type="ChEBI" id="CHEBI:57783"/>
    </ligand>
</feature>
<feature type="binding site" evidence="1">
    <location>
        <position position="285"/>
    </location>
    <ligand>
        <name>NADPH</name>
        <dbReference type="ChEBI" id="CHEBI:57783"/>
    </ligand>
</feature>
<name>GPDA_RICM5</name>
<sequence>MNKFKNIAVYGGGSFGTSLASLAAQNCNNVTLFLRDEAIAKEILHNKTNIKYLGDIKLPAHLQATTNLDIIKDFELIIIAVPSYAFDDSIKLLKTHSISKDNTLLIATKGFARNPTALFSDRLKTLLPHSPTAFFAGPNLAKELAKNLPASASIASLDIDIANKIAYNLSAKIFTTNVSSDIVTLQVAGALKNIFAIKSGIDLARKQGENARATLIVAALKEIAILSQALGGMQKNSDILLEVGVVGDLVLTCYSLGSRNTKFGYELGISSDKKKFLQEYKELVEGREALKLVLDLIKKYNLHMPVISKVASCVIPYVIPAKAGIQHKAR</sequence>
<evidence type="ECO:0000255" key="1">
    <source>
        <dbReference type="HAMAP-Rule" id="MF_00394"/>
    </source>
</evidence>
<organism>
    <name type="scientific">Rickettsia massiliae (strain Mtu5)</name>
    <dbReference type="NCBI Taxonomy" id="416276"/>
    <lineage>
        <taxon>Bacteria</taxon>
        <taxon>Pseudomonadati</taxon>
        <taxon>Pseudomonadota</taxon>
        <taxon>Alphaproteobacteria</taxon>
        <taxon>Rickettsiales</taxon>
        <taxon>Rickettsiaceae</taxon>
        <taxon>Rickettsieae</taxon>
        <taxon>Rickettsia</taxon>
        <taxon>spotted fever group</taxon>
    </lineage>
</organism>